<name>AROA_PARM1</name>
<evidence type="ECO:0000255" key="1">
    <source>
        <dbReference type="HAMAP-Rule" id="MF_00210"/>
    </source>
</evidence>
<evidence type="ECO:0000256" key="2">
    <source>
        <dbReference type="SAM" id="MobiDB-lite"/>
    </source>
</evidence>
<comment type="function">
    <text evidence="1">Catalyzes the transfer of the enolpyruvyl moiety of phosphoenolpyruvate (PEP) to the 5-hydroxyl of shikimate-3-phosphate (S3P) to produce enolpyruvyl shikimate-3-phosphate and inorganic phosphate.</text>
</comment>
<comment type="catalytic activity">
    <reaction evidence="1">
        <text>3-phosphoshikimate + phosphoenolpyruvate = 5-O-(1-carboxyvinyl)-3-phosphoshikimate + phosphate</text>
        <dbReference type="Rhea" id="RHEA:21256"/>
        <dbReference type="ChEBI" id="CHEBI:43474"/>
        <dbReference type="ChEBI" id="CHEBI:57701"/>
        <dbReference type="ChEBI" id="CHEBI:58702"/>
        <dbReference type="ChEBI" id="CHEBI:145989"/>
        <dbReference type="EC" id="2.5.1.19"/>
    </reaction>
    <physiologicalReaction direction="left-to-right" evidence="1">
        <dbReference type="Rhea" id="RHEA:21257"/>
    </physiologicalReaction>
</comment>
<comment type="pathway">
    <text evidence="1">Metabolic intermediate biosynthesis; chorismate biosynthesis; chorismate from D-erythrose 4-phosphate and phosphoenolpyruvate: step 6/7.</text>
</comment>
<comment type="subunit">
    <text evidence="1">Monomer.</text>
</comment>
<comment type="subcellular location">
    <subcellularLocation>
        <location evidence="1">Cytoplasm</location>
    </subcellularLocation>
</comment>
<comment type="similarity">
    <text evidence="1">Belongs to the EPSP synthase family.</text>
</comment>
<proteinExistence type="inferred from homology"/>
<dbReference type="EC" id="2.5.1.19" evidence="1"/>
<dbReference type="EMBL" id="AP007255">
    <property type="protein sequence ID" value="BAE53067.1"/>
    <property type="molecule type" value="Genomic_DNA"/>
</dbReference>
<dbReference type="SMR" id="Q2VZA8"/>
<dbReference type="STRING" id="342108.amb4263"/>
<dbReference type="KEGG" id="mag:amb4263"/>
<dbReference type="HOGENOM" id="CLU_024321_0_1_5"/>
<dbReference type="OrthoDB" id="9809920at2"/>
<dbReference type="UniPathway" id="UPA00053">
    <property type="reaction ID" value="UER00089"/>
</dbReference>
<dbReference type="Proteomes" id="UP000007058">
    <property type="component" value="Chromosome"/>
</dbReference>
<dbReference type="GO" id="GO:0005737">
    <property type="term" value="C:cytoplasm"/>
    <property type="evidence" value="ECO:0007669"/>
    <property type="project" value="UniProtKB-SubCell"/>
</dbReference>
<dbReference type="GO" id="GO:0003866">
    <property type="term" value="F:3-phosphoshikimate 1-carboxyvinyltransferase activity"/>
    <property type="evidence" value="ECO:0007669"/>
    <property type="project" value="UniProtKB-UniRule"/>
</dbReference>
<dbReference type="GO" id="GO:0008652">
    <property type="term" value="P:amino acid biosynthetic process"/>
    <property type="evidence" value="ECO:0007669"/>
    <property type="project" value="UniProtKB-KW"/>
</dbReference>
<dbReference type="GO" id="GO:0009073">
    <property type="term" value="P:aromatic amino acid family biosynthetic process"/>
    <property type="evidence" value="ECO:0007669"/>
    <property type="project" value="UniProtKB-KW"/>
</dbReference>
<dbReference type="GO" id="GO:0009423">
    <property type="term" value="P:chorismate biosynthetic process"/>
    <property type="evidence" value="ECO:0007669"/>
    <property type="project" value="UniProtKB-UniRule"/>
</dbReference>
<dbReference type="CDD" id="cd01556">
    <property type="entry name" value="EPSP_synthase"/>
    <property type="match status" value="1"/>
</dbReference>
<dbReference type="FunFam" id="3.65.10.10:FF:000005">
    <property type="entry name" value="3-phosphoshikimate 1-carboxyvinyltransferase"/>
    <property type="match status" value="1"/>
</dbReference>
<dbReference type="Gene3D" id="3.65.10.10">
    <property type="entry name" value="Enolpyruvate transferase domain"/>
    <property type="match status" value="2"/>
</dbReference>
<dbReference type="HAMAP" id="MF_00210">
    <property type="entry name" value="EPSP_synth"/>
    <property type="match status" value="1"/>
</dbReference>
<dbReference type="InterPro" id="IPR001986">
    <property type="entry name" value="Enolpyruvate_Tfrase_dom"/>
</dbReference>
<dbReference type="InterPro" id="IPR036968">
    <property type="entry name" value="Enolpyruvate_Tfrase_sf"/>
</dbReference>
<dbReference type="InterPro" id="IPR006264">
    <property type="entry name" value="EPSP_synthase"/>
</dbReference>
<dbReference type="InterPro" id="IPR023193">
    <property type="entry name" value="EPSP_synthase_CS"/>
</dbReference>
<dbReference type="InterPro" id="IPR013792">
    <property type="entry name" value="RNA3'P_cycl/enolpyr_Trfase_a/b"/>
</dbReference>
<dbReference type="NCBIfam" id="TIGR01356">
    <property type="entry name" value="aroA"/>
    <property type="match status" value="1"/>
</dbReference>
<dbReference type="PANTHER" id="PTHR21090">
    <property type="entry name" value="AROM/DEHYDROQUINATE SYNTHASE"/>
    <property type="match status" value="1"/>
</dbReference>
<dbReference type="PANTHER" id="PTHR21090:SF5">
    <property type="entry name" value="PENTAFUNCTIONAL AROM POLYPEPTIDE"/>
    <property type="match status" value="1"/>
</dbReference>
<dbReference type="Pfam" id="PF00275">
    <property type="entry name" value="EPSP_synthase"/>
    <property type="match status" value="1"/>
</dbReference>
<dbReference type="PIRSF" id="PIRSF000505">
    <property type="entry name" value="EPSPS"/>
    <property type="match status" value="1"/>
</dbReference>
<dbReference type="SUPFAM" id="SSF55205">
    <property type="entry name" value="EPT/RTPC-like"/>
    <property type="match status" value="1"/>
</dbReference>
<dbReference type="PROSITE" id="PS00104">
    <property type="entry name" value="EPSP_SYNTHASE_1"/>
    <property type="match status" value="1"/>
</dbReference>
<dbReference type="PROSITE" id="PS00885">
    <property type="entry name" value="EPSP_SYNTHASE_2"/>
    <property type="match status" value="1"/>
</dbReference>
<sequence length="446" mass="46870">MIMAKPLSSRRAAPLAGSAPVPGDKSISHRALMLGALAVGESVVTGLLEGDDVLRTAACMRALGAEVERRDDGSWRLFGRGVGGLMEPADVLDMGNSGTGARLLMGLVATHPFTCFFTGDGSLRSRPMRRVIDPLSRMGARFVSRDGGRLPLAVTGTAQPTPITYELPVASAQVKSAIMLAGLNTAGETTVIEREATRDHTELMLRNFGATVRVEDAEGGGRAITVVGFPELTGRPVVVPADPSSAAFPVVAALLVEGSEIRLPNVGTNPLRTGLYQTLLEMGADIRFDHPRDQAGEPVADLVVRSSRLKGVDVPAERAPSMIDEYPILAVAAAFAEGTTRMRGLGELRVKESDRLAAMARGLAACGVAVEEEKDALIVHGTGRIPDGDATVTTHFDHRIAMSFLVMGMASARPVAVDDSEAIDTSFPAFVELMNGLGAKISGDNP</sequence>
<keyword id="KW-0028">Amino-acid biosynthesis</keyword>
<keyword id="KW-0057">Aromatic amino acid biosynthesis</keyword>
<keyword id="KW-0963">Cytoplasm</keyword>
<keyword id="KW-0808">Transferase</keyword>
<gene>
    <name evidence="1" type="primary">aroA</name>
    <name type="ordered locus">amb4263</name>
</gene>
<organism>
    <name type="scientific">Paramagnetospirillum magneticum (strain ATCC 700264 / AMB-1)</name>
    <name type="common">Magnetospirillum magneticum</name>
    <dbReference type="NCBI Taxonomy" id="342108"/>
    <lineage>
        <taxon>Bacteria</taxon>
        <taxon>Pseudomonadati</taxon>
        <taxon>Pseudomonadota</taxon>
        <taxon>Alphaproteobacteria</taxon>
        <taxon>Rhodospirillales</taxon>
        <taxon>Magnetospirillaceae</taxon>
        <taxon>Paramagnetospirillum</taxon>
    </lineage>
</organism>
<accession>Q2VZA8</accession>
<protein>
    <recommendedName>
        <fullName evidence="1">3-phosphoshikimate 1-carboxyvinyltransferase</fullName>
        <ecNumber evidence="1">2.5.1.19</ecNumber>
    </recommendedName>
    <alternativeName>
        <fullName evidence="1">5-enolpyruvylshikimate-3-phosphate synthase</fullName>
        <shortName evidence="1">EPSP synthase</shortName>
        <shortName evidence="1">EPSPS</shortName>
    </alternativeName>
</protein>
<feature type="chain" id="PRO_0000325360" description="3-phosphoshikimate 1-carboxyvinyltransferase">
    <location>
        <begin position="1"/>
        <end position="446"/>
    </location>
</feature>
<feature type="region of interest" description="Disordered" evidence="2">
    <location>
        <begin position="1"/>
        <end position="20"/>
    </location>
</feature>
<feature type="active site" description="Proton acceptor" evidence="1">
    <location>
        <position position="324"/>
    </location>
</feature>
<feature type="binding site" evidence="1">
    <location>
        <position position="25"/>
    </location>
    <ligand>
        <name>3-phosphoshikimate</name>
        <dbReference type="ChEBI" id="CHEBI:145989"/>
    </ligand>
</feature>
<feature type="binding site" evidence="1">
    <location>
        <position position="25"/>
    </location>
    <ligand>
        <name>phosphoenolpyruvate</name>
        <dbReference type="ChEBI" id="CHEBI:58702"/>
    </ligand>
</feature>
<feature type="binding site" evidence="1">
    <location>
        <position position="26"/>
    </location>
    <ligand>
        <name>3-phosphoshikimate</name>
        <dbReference type="ChEBI" id="CHEBI:145989"/>
    </ligand>
</feature>
<feature type="binding site" evidence="1">
    <location>
        <position position="30"/>
    </location>
    <ligand>
        <name>3-phosphoshikimate</name>
        <dbReference type="ChEBI" id="CHEBI:145989"/>
    </ligand>
</feature>
<feature type="binding site" evidence="1">
    <location>
        <position position="98"/>
    </location>
    <ligand>
        <name>phosphoenolpyruvate</name>
        <dbReference type="ChEBI" id="CHEBI:58702"/>
    </ligand>
</feature>
<feature type="binding site" evidence="1">
    <location>
        <position position="126"/>
    </location>
    <ligand>
        <name>phosphoenolpyruvate</name>
        <dbReference type="ChEBI" id="CHEBI:58702"/>
    </ligand>
</feature>
<feature type="binding site" evidence="1">
    <location>
        <position position="171"/>
    </location>
    <ligand>
        <name>3-phosphoshikimate</name>
        <dbReference type="ChEBI" id="CHEBI:145989"/>
    </ligand>
</feature>
<feature type="binding site" evidence="1">
    <location>
        <position position="173"/>
    </location>
    <ligand>
        <name>3-phosphoshikimate</name>
        <dbReference type="ChEBI" id="CHEBI:145989"/>
    </ligand>
</feature>
<feature type="binding site" evidence="1">
    <location>
        <position position="173"/>
    </location>
    <ligand>
        <name>phosphoenolpyruvate</name>
        <dbReference type="ChEBI" id="CHEBI:58702"/>
    </ligand>
</feature>
<feature type="binding site" evidence="1">
    <location>
        <position position="324"/>
    </location>
    <ligand>
        <name>3-phosphoshikimate</name>
        <dbReference type="ChEBI" id="CHEBI:145989"/>
    </ligand>
</feature>
<feature type="binding site" evidence="1">
    <location>
        <position position="351"/>
    </location>
    <ligand>
        <name>3-phosphoshikimate</name>
        <dbReference type="ChEBI" id="CHEBI:145989"/>
    </ligand>
</feature>
<feature type="binding site" evidence="1">
    <location>
        <position position="355"/>
    </location>
    <ligand>
        <name>phosphoenolpyruvate</name>
        <dbReference type="ChEBI" id="CHEBI:58702"/>
    </ligand>
</feature>
<feature type="binding site" evidence="1">
    <location>
        <position position="399"/>
    </location>
    <ligand>
        <name>phosphoenolpyruvate</name>
        <dbReference type="ChEBI" id="CHEBI:58702"/>
    </ligand>
</feature>
<reference key="1">
    <citation type="journal article" date="2005" name="DNA Res.">
        <title>Complete genome sequence of the facultative anaerobic magnetotactic bacterium Magnetospirillum sp. strain AMB-1.</title>
        <authorList>
            <person name="Matsunaga T."/>
            <person name="Okamura Y."/>
            <person name="Fukuda Y."/>
            <person name="Wahyudi A.T."/>
            <person name="Murase Y."/>
            <person name="Takeyama H."/>
        </authorList>
    </citation>
    <scope>NUCLEOTIDE SEQUENCE [LARGE SCALE GENOMIC DNA]</scope>
    <source>
        <strain>ATCC 700264 / AMB-1</strain>
    </source>
</reference>